<accession>Q9YUS3</accession>
<evidence type="ECO:0000256" key="1">
    <source>
        <dbReference type="SAM" id="MobiDB-lite"/>
    </source>
</evidence>
<evidence type="ECO:0000305" key="2"/>
<reference key="1">
    <citation type="journal article" date="1998" name="J. Gen. Virol.">
        <title>Identification and characterization of the Tupaia herpesvirus DNA polymerase gene.</title>
        <authorList>
            <person name="Springfeld C."/>
            <person name="Tidona C.A."/>
            <person name="Kehm R."/>
            <person name="Bahr U."/>
            <person name="Darai G."/>
        </authorList>
    </citation>
    <scope>NUCLEOTIDE SEQUENCE [GENOMIC DNA]</scope>
</reference>
<dbReference type="EC" id="2.7.7.7"/>
<dbReference type="EMBL" id="AF074327">
    <property type="protein sequence ID" value="AAD08666.1"/>
    <property type="molecule type" value="Genomic_DNA"/>
</dbReference>
<dbReference type="SMR" id="Q9YUS3"/>
<dbReference type="GO" id="GO:0042025">
    <property type="term" value="C:host cell nucleus"/>
    <property type="evidence" value="ECO:0007669"/>
    <property type="project" value="UniProtKB-SubCell"/>
</dbReference>
<dbReference type="GO" id="GO:0003677">
    <property type="term" value="F:DNA binding"/>
    <property type="evidence" value="ECO:0007669"/>
    <property type="project" value="UniProtKB-KW"/>
</dbReference>
<dbReference type="GO" id="GO:0003887">
    <property type="term" value="F:DNA-directed DNA polymerase activity"/>
    <property type="evidence" value="ECO:0007669"/>
    <property type="project" value="UniProtKB-KW"/>
</dbReference>
<dbReference type="GO" id="GO:0000166">
    <property type="term" value="F:nucleotide binding"/>
    <property type="evidence" value="ECO:0007669"/>
    <property type="project" value="InterPro"/>
</dbReference>
<dbReference type="GO" id="GO:0006261">
    <property type="term" value="P:DNA-templated DNA replication"/>
    <property type="evidence" value="ECO:0007669"/>
    <property type="project" value="TreeGrafter"/>
</dbReference>
<dbReference type="GO" id="GO:0039693">
    <property type="term" value="P:viral DNA genome replication"/>
    <property type="evidence" value="ECO:0007669"/>
    <property type="project" value="UniProtKB-KW"/>
</dbReference>
<dbReference type="Gene3D" id="1.10.132.60">
    <property type="entry name" value="DNA polymerase family B, C-terminal domain"/>
    <property type="match status" value="1"/>
</dbReference>
<dbReference type="Gene3D" id="3.30.342.10">
    <property type="entry name" value="DNA Polymerase, chain B, domain 1"/>
    <property type="match status" value="1"/>
</dbReference>
<dbReference type="Gene3D" id="1.10.287.690">
    <property type="entry name" value="Helix hairpin bin"/>
    <property type="match status" value="1"/>
</dbReference>
<dbReference type="Gene3D" id="3.90.1600.10">
    <property type="entry name" value="Palm domain of DNA polymerase"/>
    <property type="match status" value="1"/>
</dbReference>
<dbReference type="Gene3D" id="3.30.420.10">
    <property type="entry name" value="Ribonuclease H-like superfamily/Ribonuclease H"/>
    <property type="match status" value="1"/>
</dbReference>
<dbReference type="InterPro" id="IPR006172">
    <property type="entry name" value="DNA-dir_DNA_pol_B"/>
</dbReference>
<dbReference type="InterPro" id="IPR017964">
    <property type="entry name" value="DNA-dir_DNA_pol_B_CS"/>
</dbReference>
<dbReference type="InterPro" id="IPR006133">
    <property type="entry name" value="DNA-dir_DNA_pol_B_exonuc"/>
</dbReference>
<dbReference type="InterPro" id="IPR006134">
    <property type="entry name" value="DNA-dir_DNA_pol_B_multi_dom"/>
</dbReference>
<dbReference type="InterPro" id="IPR043502">
    <property type="entry name" value="DNA/RNA_pol_sf"/>
</dbReference>
<dbReference type="InterPro" id="IPR042087">
    <property type="entry name" value="DNA_pol_B_thumb"/>
</dbReference>
<dbReference type="InterPro" id="IPR023211">
    <property type="entry name" value="DNA_pol_palm_dom_sf"/>
</dbReference>
<dbReference type="InterPro" id="IPR050240">
    <property type="entry name" value="DNA_pol_type-B"/>
</dbReference>
<dbReference type="InterPro" id="IPR012337">
    <property type="entry name" value="RNaseH-like_sf"/>
</dbReference>
<dbReference type="InterPro" id="IPR036397">
    <property type="entry name" value="RNaseH_sf"/>
</dbReference>
<dbReference type="PANTHER" id="PTHR10322">
    <property type="entry name" value="DNA POLYMERASE CATALYTIC SUBUNIT"/>
    <property type="match status" value="1"/>
</dbReference>
<dbReference type="PANTHER" id="PTHR10322:SF23">
    <property type="entry name" value="DNA POLYMERASE DELTA CATALYTIC SUBUNIT"/>
    <property type="match status" value="1"/>
</dbReference>
<dbReference type="Pfam" id="PF00136">
    <property type="entry name" value="DNA_pol_B"/>
    <property type="match status" value="2"/>
</dbReference>
<dbReference type="Pfam" id="PF03104">
    <property type="entry name" value="DNA_pol_B_exo1"/>
    <property type="match status" value="1"/>
</dbReference>
<dbReference type="PRINTS" id="PR00106">
    <property type="entry name" value="DNAPOLB"/>
</dbReference>
<dbReference type="SMART" id="SM00486">
    <property type="entry name" value="POLBc"/>
    <property type="match status" value="1"/>
</dbReference>
<dbReference type="SUPFAM" id="SSF56672">
    <property type="entry name" value="DNA/RNA polymerases"/>
    <property type="match status" value="1"/>
</dbReference>
<dbReference type="SUPFAM" id="SSF53098">
    <property type="entry name" value="Ribonuclease H-like"/>
    <property type="match status" value="1"/>
</dbReference>
<dbReference type="PROSITE" id="PS00116">
    <property type="entry name" value="DNA_POLYMERASE_B"/>
    <property type="match status" value="1"/>
</dbReference>
<proteinExistence type="inferred from homology"/>
<name>DPOL_TUHV1</name>
<protein>
    <recommendedName>
        <fullName>DNA polymerase catalytic subunit</fullName>
        <ecNumber>2.7.7.7</ecNumber>
    </recommendedName>
</protein>
<keyword id="KW-0235">DNA replication</keyword>
<keyword id="KW-0238">DNA-binding</keyword>
<keyword id="KW-0239">DNA-directed DNA polymerase</keyword>
<keyword id="KW-1048">Host nucleus</keyword>
<keyword id="KW-0548">Nucleotidyltransferase</keyword>
<keyword id="KW-0808">Transferase</keyword>
<keyword id="KW-1194">Viral DNA replication</keyword>
<gene>
    <name type="primary">DPOL</name>
</gene>
<sequence>MSTVTFFNPYLCGPRKPRAPSAGEGGAEGAAAARARAASAPFLQIVPRGCLYDGERGLLKHNCALAPRMFFRDRPYVLSKDLVWPTLPPPAVPASTTERAPRAPAPSADLLFHMYDQAETVVSADSKELIHPGYRHRITPCGVVLRLFGRTADGASLCVNVFGQDAYFYCRYGDAQSLHDRLYRLSDTLELAPVFHVRVRRVQRCSIYGYGTRPFADLYLVACGNWHVLKKMGQCLLDEGVEVFEVGVSPLTRFLLDKKIPSFGWCRLRRWHARPAHGRLSTAELEVDCEVADVRGVDDVAWPLYRCLSFDIECLSGGGAFPVAENLDDVVIQISCVCYPVGGTEEQRAAFPVAERHLFTLGPCAPIPGVLVYEFPSEFELLCGFFTFFGRYAPEFVTGYNINNFDWRYLLTRAERVYRWPVAEYTRLRFGGRFCAYVPGGGGRQPGFRTAQTKVLITGTVVLDLYPVCMAKVSAPDYKLNTVCELYLGRQKEDLSYKELPRAFLSGDAGRARVGRYCVQDAVLVKELFEKLNYHYEAAAVARLARISLRKVIFEGQQIRIYTCLLEEAAARQMVVPTFRSGAQRGAATGAGGGGGEETTYQGATVFEPTVGYHHAPVAVFDFASLYPSIIMAHNLCYSTWLRDDPGTPARPPETPARPPETPAAGPSGAAHAGGVPGATFRTPFRTPAGVPAAAAGGVGAGPPGGGAVSSASVGGRAAVSPSETPAEREPEPAPEDVFVVHVGQGVSYRFVRENVRASILSELLRRWLAQRRAVREAMRECEDETRRLLLDKEQLALKVTCNAFYGFTGFSQGMLPCLPVAASITTIGRDMLSRTSAYIEAHFAEPAFLARFFEPGDLPRADEPPPTVRVIYGDTDSVFVRFGGVRAGAIVARGEDLAAAVTEALFTEPVKLEFEKLFVALMMICKKRYIGRVFGSDALVMKGVDLVRKTACRFVKTVVRDVVELVFRDAAVAEAATRMSELTLEEMRRVGVPAGFHVLLQRLARARDDLFSGRVETAALVLSSVLSQDVSRYKQLNLPHLAVIRRLAARSEELPSVGDRVSYVLTAGPPDGRANAPNYELAEDPDYVAAHRVPIHAAKYFEQVVKAVTNTLYPVFPRGVVRRDRFLADLVPKRVYLGDEFKRHARPVEEEVCESERGGSGLLSSLDSSR</sequence>
<comment type="catalytic activity">
    <reaction>
        <text>DNA(n) + a 2'-deoxyribonucleoside 5'-triphosphate = DNA(n+1) + diphosphate</text>
        <dbReference type="Rhea" id="RHEA:22508"/>
        <dbReference type="Rhea" id="RHEA-COMP:17339"/>
        <dbReference type="Rhea" id="RHEA-COMP:17340"/>
        <dbReference type="ChEBI" id="CHEBI:33019"/>
        <dbReference type="ChEBI" id="CHEBI:61560"/>
        <dbReference type="ChEBI" id="CHEBI:173112"/>
        <dbReference type="EC" id="2.7.7.7"/>
    </reaction>
</comment>
<comment type="subcellular location">
    <subcellularLocation>
        <location>Host nucleus</location>
    </subcellularLocation>
</comment>
<comment type="similarity">
    <text evidence="2">Belongs to the DNA polymerase type-B family.</text>
</comment>
<organismHost>
    <name type="scientific">Tupaia belangeri</name>
    <name type="common">Common tree shrew</name>
    <name type="synonym">Tupaia glis belangeri</name>
    <dbReference type="NCBI Taxonomy" id="37347"/>
</organismHost>
<feature type="chain" id="PRO_0000046523" description="DNA polymerase catalytic subunit">
    <location>
        <begin position="1"/>
        <end position="1171"/>
    </location>
</feature>
<feature type="region of interest" description="Disordered" evidence="1">
    <location>
        <begin position="647"/>
        <end position="687"/>
    </location>
</feature>
<feature type="region of interest" description="Disordered" evidence="1">
    <location>
        <begin position="704"/>
        <end position="735"/>
    </location>
</feature>
<feature type="region of interest" description="Disordered" evidence="1">
    <location>
        <begin position="1149"/>
        <end position="1171"/>
    </location>
</feature>
<feature type="compositionally biased region" description="Pro residues" evidence="1">
    <location>
        <begin position="649"/>
        <end position="662"/>
    </location>
</feature>
<feature type="compositionally biased region" description="Low complexity" evidence="1">
    <location>
        <begin position="663"/>
        <end position="674"/>
    </location>
</feature>
<feature type="compositionally biased region" description="Low complexity" evidence="1">
    <location>
        <begin position="709"/>
        <end position="725"/>
    </location>
</feature>
<feature type="compositionally biased region" description="Basic and acidic residues" evidence="1">
    <location>
        <begin position="1149"/>
        <end position="1158"/>
    </location>
</feature>
<organism>
    <name type="scientific">Tupaiid herpesvirus 1 (strain 1)</name>
    <name type="common">TuHV-1</name>
    <name type="synonym">Herpesvirus tupaia (strain 1)</name>
    <dbReference type="NCBI Taxonomy" id="10397"/>
    <lineage>
        <taxon>Viruses</taxon>
        <taxon>Duplodnaviria</taxon>
        <taxon>Heunggongvirae</taxon>
        <taxon>Peploviricota</taxon>
        <taxon>Herviviricetes</taxon>
        <taxon>Herpesvirales</taxon>
        <taxon>Orthoherpesviridae</taxon>
        <taxon>Betaherpesvirinae</taxon>
        <taxon>Quwivirus</taxon>
        <taxon>Quwivirus tupaiidbeta1</taxon>
    </lineage>
</organism>